<reference key="1">
    <citation type="journal article" date="1997" name="Nature">
        <title>The nucleotide sequence of Saccharomyces cerevisiae chromosome XV.</title>
        <authorList>
            <person name="Dujon B."/>
            <person name="Albermann K."/>
            <person name="Aldea M."/>
            <person name="Alexandraki D."/>
            <person name="Ansorge W."/>
            <person name="Arino J."/>
            <person name="Benes V."/>
            <person name="Bohn C."/>
            <person name="Bolotin-Fukuhara M."/>
            <person name="Bordonne R."/>
            <person name="Boyer J."/>
            <person name="Camasses A."/>
            <person name="Casamayor A."/>
            <person name="Casas C."/>
            <person name="Cheret G."/>
            <person name="Cziepluch C."/>
            <person name="Daignan-Fornier B."/>
            <person name="Dang V.-D."/>
            <person name="de Haan M."/>
            <person name="Delius H."/>
            <person name="Durand P."/>
            <person name="Fairhead C."/>
            <person name="Feldmann H."/>
            <person name="Gaillon L."/>
            <person name="Galisson F."/>
            <person name="Gamo F.-J."/>
            <person name="Gancedo C."/>
            <person name="Goffeau A."/>
            <person name="Goulding S.E."/>
            <person name="Grivell L.A."/>
            <person name="Habbig B."/>
            <person name="Hand N.J."/>
            <person name="Hani J."/>
            <person name="Hattenhorst U."/>
            <person name="Hebling U."/>
            <person name="Hernando Y."/>
            <person name="Herrero E."/>
            <person name="Heumann K."/>
            <person name="Hiesel R."/>
            <person name="Hilger F."/>
            <person name="Hofmann B."/>
            <person name="Hollenberg C.P."/>
            <person name="Hughes B."/>
            <person name="Jauniaux J.-C."/>
            <person name="Kalogeropoulos A."/>
            <person name="Katsoulou C."/>
            <person name="Kordes E."/>
            <person name="Lafuente M.J."/>
            <person name="Landt O."/>
            <person name="Louis E.J."/>
            <person name="Maarse A.C."/>
            <person name="Madania A."/>
            <person name="Mannhaupt G."/>
            <person name="Marck C."/>
            <person name="Martin R.P."/>
            <person name="Mewes H.-W."/>
            <person name="Michaux G."/>
            <person name="Paces V."/>
            <person name="Parle-McDermott A.G."/>
            <person name="Pearson B.M."/>
            <person name="Perrin A."/>
            <person name="Pettersson B."/>
            <person name="Poch O."/>
            <person name="Pohl T.M."/>
            <person name="Poirey R."/>
            <person name="Portetelle D."/>
            <person name="Pujol A."/>
            <person name="Purnelle B."/>
            <person name="Ramezani Rad M."/>
            <person name="Rechmann S."/>
            <person name="Schwager C."/>
            <person name="Schweizer M."/>
            <person name="Sor F."/>
            <person name="Sterky F."/>
            <person name="Tarassov I.A."/>
            <person name="Teodoru C."/>
            <person name="Tettelin H."/>
            <person name="Thierry A."/>
            <person name="Tobiasch E."/>
            <person name="Tzermia M."/>
            <person name="Uhlen M."/>
            <person name="Unseld M."/>
            <person name="Valens M."/>
            <person name="Vandenbol M."/>
            <person name="Vetter I."/>
            <person name="Vlcek C."/>
            <person name="Voet M."/>
            <person name="Volckaert G."/>
            <person name="Voss H."/>
            <person name="Wambutt R."/>
            <person name="Wedler H."/>
            <person name="Wiemann S."/>
            <person name="Winsor B."/>
            <person name="Wolfe K.H."/>
            <person name="Zollner A."/>
            <person name="Zumstein E."/>
            <person name="Kleine K."/>
        </authorList>
    </citation>
    <scope>NUCLEOTIDE SEQUENCE [LARGE SCALE GENOMIC DNA]</scope>
    <source>
        <strain>ATCC 204508 / S288c</strain>
    </source>
</reference>
<reference key="2">
    <citation type="journal article" date="2014" name="G3 (Bethesda)">
        <title>The reference genome sequence of Saccharomyces cerevisiae: Then and now.</title>
        <authorList>
            <person name="Engel S.R."/>
            <person name="Dietrich F.S."/>
            <person name="Fisk D.G."/>
            <person name="Binkley G."/>
            <person name="Balakrishnan R."/>
            <person name="Costanzo M.C."/>
            <person name="Dwight S.S."/>
            <person name="Hitz B.C."/>
            <person name="Karra K."/>
            <person name="Nash R.S."/>
            <person name="Weng S."/>
            <person name="Wong E.D."/>
            <person name="Lloyd P."/>
            <person name="Skrzypek M.S."/>
            <person name="Miyasato S.R."/>
            <person name="Simison M."/>
            <person name="Cherry J.M."/>
        </authorList>
    </citation>
    <scope>GENOME REANNOTATION</scope>
    <source>
        <strain>ATCC 204508 / S288c</strain>
    </source>
</reference>
<evidence type="ECO:0000255" key="1"/>
<evidence type="ECO:0000305" key="2"/>
<organism>
    <name type="scientific">Saccharomyces cerevisiae (strain ATCC 204508 / S288c)</name>
    <name type="common">Baker's yeast</name>
    <dbReference type="NCBI Taxonomy" id="559292"/>
    <lineage>
        <taxon>Eukaryota</taxon>
        <taxon>Fungi</taxon>
        <taxon>Dikarya</taxon>
        <taxon>Ascomycota</taxon>
        <taxon>Saccharomycotina</taxon>
        <taxon>Saccharomycetes</taxon>
        <taxon>Saccharomycetales</taxon>
        <taxon>Saccharomycetaceae</taxon>
        <taxon>Saccharomyces</taxon>
    </lineage>
</organism>
<name>YO162_YEAST</name>
<gene>
    <name type="ordered locus">YOL162W</name>
    <name type="ORF">O0235</name>
</gene>
<dbReference type="EMBL" id="Z74904">
    <property type="protein sequence ID" value="CAA99184.1"/>
    <property type="molecule type" value="Genomic_DNA"/>
</dbReference>
<dbReference type="EMBL" id="BK006948">
    <property type="protein sequence ID" value="DAA10624.1"/>
    <property type="molecule type" value="Genomic_DNA"/>
</dbReference>
<dbReference type="PIR" id="S66861">
    <property type="entry name" value="S66861"/>
</dbReference>
<dbReference type="RefSeq" id="NP_014480.1">
    <property type="nucleotide sequence ID" value="NM_001183415.1"/>
</dbReference>
<dbReference type="SMR" id="P0CF19"/>
<dbReference type="BioGRID" id="34256">
    <property type="interactions" value="49"/>
</dbReference>
<dbReference type="FunCoup" id="P0CF19">
    <property type="interactions" value="36"/>
</dbReference>
<dbReference type="STRING" id="4932.YOL162W"/>
<dbReference type="PaxDb" id="4932-YOL162W"/>
<dbReference type="EnsemblFungi" id="YOL162W_mRNA">
    <property type="protein sequence ID" value="YOL162W"/>
    <property type="gene ID" value="YOL162W"/>
</dbReference>
<dbReference type="GeneID" id="854002"/>
<dbReference type="KEGG" id="sce:YOL162W"/>
<dbReference type="AGR" id="SGD:S000005522"/>
<dbReference type="SGD" id="S000005522">
    <property type="gene designation" value="YOL162W"/>
</dbReference>
<dbReference type="VEuPathDB" id="FungiDB:YOL162W"/>
<dbReference type="eggNOG" id="KOG2533">
    <property type="taxonomic scope" value="Eukaryota"/>
</dbReference>
<dbReference type="GeneTree" id="ENSGT00940000176452"/>
<dbReference type="HOGENOM" id="CLU_001265_2_0_1"/>
<dbReference type="InParanoid" id="P0CF19"/>
<dbReference type="OMA" id="CIMNIAL"/>
<dbReference type="OrthoDB" id="1935484at2759"/>
<dbReference type="BioCyc" id="YEAST:G3O-33549-MONOMER"/>
<dbReference type="BioGRID-ORCS" id="854002">
    <property type="hits" value="0 hits in 10 CRISPR screens"/>
</dbReference>
<dbReference type="Proteomes" id="UP000002311">
    <property type="component" value="Chromosome XV"/>
</dbReference>
<dbReference type="RNAct" id="P0CF19">
    <property type="molecule type" value="protein"/>
</dbReference>
<dbReference type="GO" id="GO:0005783">
    <property type="term" value="C:endoplasmic reticulum"/>
    <property type="evidence" value="ECO:0007005"/>
    <property type="project" value="SGD"/>
</dbReference>
<dbReference type="GO" id="GO:0016020">
    <property type="term" value="C:membrane"/>
    <property type="evidence" value="ECO:0007669"/>
    <property type="project" value="UniProtKB-SubCell"/>
</dbReference>
<dbReference type="GO" id="GO:0022857">
    <property type="term" value="F:transmembrane transporter activity"/>
    <property type="evidence" value="ECO:0000255"/>
    <property type="project" value="SGD"/>
</dbReference>
<dbReference type="GO" id="GO:0055085">
    <property type="term" value="P:transmembrane transport"/>
    <property type="evidence" value="ECO:0000255"/>
    <property type="project" value="SGD"/>
</dbReference>
<dbReference type="InterPro" id="IPR036259">
    <property type="entry name" value="MFS_trans_sf"/>
</dbReference>
<dbReference type="PANTHER" id="PTHR43791:SF29">
    <property type="entry name" value="MAJOR FACILITATOR SUPERFAMILY (MFS) PROFILE DOMAIN-CONTAINING PROTEIN"/>
    <property type="match status" value="1"/>
</dbReference>
<dbReference type="PANTHER" id="PTHR43791">
    <property type="entry name" value="PERMEASE-RELATED"/>
    <property type="match status" value="1"/>
</dbReference>
<dbReference type="SUPFAM" id="SSF103473">
    <property type="entry name" value="MFS general substrate transporter"/>
    <property type="match status" value="1"/>
</dbReference>
<proteinExistence type="uncertain"/>
<accession>P0CF19</accession>
<accession>D6W1Q8</accession>
<accession>Q08330</accession>
<accession>Q08337</accession>
<sequence>MGLLAYIPTNVLATYLTLVLRSIGFTTFQANLLAIPNFVLHILLLFGLTWSTEKCNNRLGLSLLQPLYTVPLLAVLRFWKGTMFNKWGTYAIITLILDNPYIHAICVSLCSRNSQSVKTRTVSTCLYNMFVQAGLIISSNIYAKSDAPLYRKGNGVLFGLALFMFPILIGSKLIYVYINKQRDKRWNAMSEEEKDHYLSTTSDAGSRRLDFRFYH</sequence>
<protein>
    <recommendedName>
        <fullName>Putative uncharacterized transporter YOL162W</fullName>
    </recommendedName>
</protein>
<keyword id="KW-0472">Membrane</keyword>
<keyword id="KW-1185">Reference proteome</keyword>
<keyword id="KW-0812">Transmembrane</keyword>
<keyword id="KW-1133">Transmembrane helix</keyword>
<keyword id="KW-0813">Transport</keyword>
<comment type="subcellular location">
    <subcellularLocation>
        <location evidence="2">Membrane</location>
        <topology evidence="2">Multi-pass membrane protein</topology>
    </subcellularLocation>
</comment>
<comment type="similarity">
    <text evidence="2">Belongs to the major facilitator superfamily. Allantoate permease family.</text>
</comment>
<comment type="caution">
    <text evidence="2">Could be the product of a pseudogene. This is the C-terminal part of an allantoate permease subfamily member protein. Strain S288c has a stop codon in position 170, which disrupts the gene coding for this protein and produces two ORFs YOL163W and YOL162W.</text>
</comment>
<feature type="chain" id="PRO_0000269759" description="Putative uncharacterized transporter YOL162W">
    <location>
        <begin position="1"/>
        <end position="215"/>
    </location>
</feature>
<feature type="transmembrane region" description="Helical" evidence="1">
    <location>
        <begin position="3"/>
        <end position="23"/>
    </location>
</feature>
<feature type="transmembrane region" description="Helical" evidence="1">
    <location>
        <begin position="30"/>
        <end position="50"/>
    </location>
</feature>
<feature type="transmembrane region" description="Helical" evidence="1">
    <location>
        <begin position="59"/>
        <end position="79"/>
    </location>
</feature>
<feature type="transmembrane region" description="Helical" evidence="1">
    <location>
        <begin position="87"/>
        <end position="107"/>
    </location>
</feature>
<feature type="transmembrane region" description="Helical" evidence="1">
    <location>
        <begin position="122"/>
        <end position="142"/>
    </location>
</feature>
<feature type="transmembrane region" description="Helical" evidence="1">
    <location>
        <begin position="156"/>
        <end position="176"/>
    </location>
</feature>